<reference key="1">
    <citation type="submission" date="2009-03" db="EMBL/GenBank/DDBJ databases">
        <title>Complete genome sequence of Edwardsiella ictaluri 93-146.</title>
        <authorList>
            <person name="Williams M.L."/>
            <person name="Gillaspy A.F."/>
            <person name="Dyer D.W."/>
            <person name="Thune R.L."/>
            <person name="Waldbieser G.C."/>
            <person name="Schuster S.C."/>
            <person name="Gipson J."/>
            <person name="Zaitshik J."/>
            <person name="Landry C."/>
            <person name="Lawrence M.L."/>
        </authorList>
    </citation>
    <scope>NUCLEOTIDE SEQUENCE [LARGE SCALE GENOMIC DNA]</scope>
    <source>
        <strain>93-146</strain>
    </source>
</reference>
<protein>
    <recommendedName>
        <fullName evidence="1">Large ribosomal subunit protein uL13</fullName>
    </recommendedName>
    <alternativeName>
        <fullName evidence="2">50S ribosomal protein L13</fullName>
    </alternativeName>
</protein>
<evidence type="ECO:0000255" key="1">
    <source>
        <dbReference type="HAMAP-Rule" id="MF_01366"/>
    </source>
</evidence>
<evidence type="ECO:0000305" key="2"/>
<gene>
    <name evidence="1" type="primary">rplM</name>
    <name type="ordered locus">NT01EI_0592</name>
</gene>
<proteinExistence type="inferred from homology"/>
<organism>
    <name type="scientific">Edwardsiella ictaluri (strain 93-146)</name>
    <dbReference type="NCBI Taxonomy" id="634503"/>
    <lineage>
        <taxon>Bacteria</taxon>
        <taxon>Pseudomonadati</taxon>
        <taxon>Pseudomonadota</taxon>
        <taxon>Gammaproteobacteria</taxon>
        <taxon>Enterobacterales</taxon>
        <taxon>Hafniaceae</taxon>
        <taxon>Edwardsiella</taxon>
    </lineage>
</organism>
<comment type="function">
    <text evidence="1">This protein is one of the early assembly proteins of the 50S ribosomal subunit, although it is not seen to bind rRNA by itself. It is important during the early stages of 50S assembly.</text>
</comment>
<comment type="subunit">
    <text evidence="1">Part of the 50S ribosomal subunit.</text>
</comment>
<comment type="similarity">
    <text evidence="1">Belongs to the universal ribosomal protein uL13 family.</text>
</comment>
<dbReference type="EMBL" id="CP001600">
    <property type="protein sequence ID" value="ACR67821.1"/>
    <property type="molecule type" value="Genomic_DNA"/>
</dbReference>
<dbReference type="RefSeq" id="WP_015870019.1">
    <property type="nucleotide sequence ID" value="NZ_CP169062.1"/>
</dbReference>
<dbReference type="SMR" id="C5B747"/>
<dbReference type="STRING" id="67780.B6E78_13665"/>
<dbReference type="GeneID" id="69537669"/>
<dbReference type="KEGG" id="eic:NT01EI_0592"/>
<dbReference type="PATRIC" id="fig|634503.3.peg.537"/>
<dbReference type="HOGENOM" id="CLU_082184_2_2_6"/>
<dbReference type="OrthoDB" id="9801330at2"/>
<dbReference type="Proteomes" id="UP000001485">
    <property type="component" value="Chromosome"/>
</dbReference>
<dbReference type="GO" id="GO:0022625">
    <property type="term" value="C:cytosolic large ribosomal subunit"/>
    <property type="evidence" value="ECO:0007669"/>
    <property type="project" value="TreeGrafter"/>
</dbReference>
<dbReference type="GO" id="GO:0003729">
    <property type="term" value="F:mRNA binding"/>
    <property type="evidence" value="ECO:0007669"/>
    <property type="project" value="TreeGrafter"/>
</dbReference>
<dbReference type="GO" id="GO:0003735">
    <property type="term" value="F:structural constituent of ribosome"/>
    <property type="evidence" value="ECO:0007669"/>
    <property type="project" value="InterPro"/>
</dbReference>
<dbReference type="GO" id="GO:0017148">
    <property type="term" value="P:negative regulation of translation"/>
    <property type="evidence" value="ECO:0007669"/>
    <property type="project" value="TreeGrafter"/>
</dbReference>
<dbReference type="GO" id="GO:0006412">
    <property type="term" value="P:translation"/>
    <property type="evidence" value="ECO:0007669"/>
    <property type="project" value="UniProtKB-UniRule"/>
</dbReference>
<dbReference type="CDD" id="cd00392">
    <property type="entry name" value="Ribosomal_L13"/>
    <property type="match status" value="1"/>
</dbReference>
<dbReference type="FunFam" id="3.90.1180.10:FF:000001">
    <property type="entry name" value="50S ribosomal protein L13"/>
    <property type="match status" value="1"/>
</dbReference>
<dbReference type="Gene3D" id="3.90.1180.10">
    <property type="entry name" value="Ribosomal protein L13"/>
    <property type="match status" value="1"/>
</dbReference>
<dbReference type="HAMAP" id="MF_01366">
    <property type="entry name" value="Ribosomal_uL13"/>
    <property type="match status" value="1"/>
</dbReference>
<dbReference type="InterPro" id="IPR005822">
    <property type="entry name" value="Ribosomal_uL13"/>
</dbReference>
<dbReference type="InterPro" id="IPR005823">
    <property type="entry name" value="Ribosomal_uL13_bac-type"/>
</dbReference>
<dbReference type="InterPro" id="IPR023563">
    <property type="entry name" value="Ribosomal_uL13_CS"/>
</dbReference>
<dbReference type="InterPro" id="IPR036899">
    <property type="entry name" value="Ribosomal_uL13_sf"/>
</dbReference>
<dbReference type="NCBIfam" id="TIGR01066">
    <property type="entry name" value="rplM_bact"/>
    <property type="match status" value="1"/>
</dbReference>
<dbReference type="PANTHER" id="PTHR11545:SF2">
    <property type="entry name" value="LARGE RIBOSOMAL SUBUNIT PROTEIN UL13M"/>
    <property type="match status" value="1"/>
</dbReference>
<dbReference type="PANTHER" id="PTHR11545">
    <property type="entry name" value="RIBOSOMAL PROTEIN L13"/>
    <property type="match status" value="1"/>
</dbReference>
<dbReference type="Pfam" id="PF00572">
    <property type="entry name" value="Ribosomal_L13"/>
    <property type="match status" value="1"/>
</dbReference>
<dbReference type="PIRSF" id="PIRSF002181">
    <property type="entry name" value="Ribosomal_L13"/>
    <property type="match status" value="1"/>
</dbReference>
<dbReference type="SUPFAM" id="SSF52161">
    <property type="entry name" value="Ribosomal protein L13"/>
    <property type="match status" value="1"/>
</dbReference>
<dbReference type="PROSITE" id="PS00783">
    <property type="entry name" value="RIBOSOMAL_L13"/>
    <property type="match status" value="1"/>
</dbReference>
<sequence>MKTFTAKPETVKRDWYVVDASGKTLGRLATELARRLRGKHKAEYTPHVDTGDYIIVLNAEKVAVTGNKRLDKKYFHHTGHIGGIKEATFEEMIARHPERVIEIAVKGMLPKGPLGRAMFRKLKVYAGNEHNHAAQQPQVLDI</sequence>
<feature type="chain" id="PRO_1000214949" description="Large ribosomal subunit protein uL13">
    <location>
        <begin position="1"/>
        <end position="142"/>
    </location>
</feature>
<accession>C5B747</accession>
<keyword id="KW-0687">Ribonucleoprotein</keyword>
<keyword id="KW-0689">Ribosomal protein</keyword>
<name>RL13_EDWI9</name>